<dbReference type="EMBL" id="CP001096">
    <property type="protein sequence ID" value="ACF02148.1"/>
    <property type="molecule type" value="Genomic_DNA"/>
</dbReference>
<dbReference type="RefSeq" id="WP_011158776.1">
    <property type="nucleotide sequence ID" value="NC_011004.1"/>
</dbReference>
<dbReference type="SMR" id="B3QBW1"/>
<dbReference type="GeneID" id="66894317"/>
<dbReference type="KEGG" id="rpt:Rpal_3648"/>
<dbReference type="HOGENOM" id="CLU_055188_4_0_5"/>
<dbReference type="OrthoDB" id="9810293at2"/>
<dbReference type="Proteomes" id="UP000001725">
    <property type="component" value="Chromosome"/>
</dbReference>
<dbReference type="GO" id="GO:0022625">
    <property type="term" value="C:cytosolic large ribosomal subunit"/>
    <property type="evidence" value="ECO:0007669"/>
    <property type="project" value="TreeGrafter"/>
</dbReference>
<dbReference type="GO" id="GO:0019843">
    <property type="term" value="F:rRNA binding"/>
    <property type="evidence" value="ECO:0007669"/>
    <property type="project" value="UniProtKB-UniRule"/>
</dbReference>
<dbReference type="GO" id="GO:0003735">
    <property type="term" value="F:structural constituent of ribosome"/>
    <property type="evidence" value="ECO:0007669"/>
    <property type="project" value="InterPro"/>
</dbReference>
<dbReference type="GO" id="GO:0006412">
    <property type="term" value="P:translation"/>
    <property type="evidence" value="ECO:0007669"/>
    <property type="project" value="UniProtKB-UniRule"/>
</dbReference>
<dbReference type="Gene3D" id="3.100.10.10">
    <property type="match status" value="1"/>
</dbReference>
<dbReference type="HAMAP" id="MF_01341">
    <property type="entry name" value="Ribosomal_uL15"/>
    <property type="match status" value="1"/>
</dbReference>
<dbReference type="InterPro" id="IPR030878">
    <property type="entry name" value="Ribosomal_uL15"/>
</dbReference>
<dbReference type="InterPro" id="IPR021131">
    <property type="entry name" value="Ribosomal_uL15/eL18"/>
</dbReference>
<dbReference type="InterPro" id="IPR036227">
    <property type="entry name" value="Ribosomal_uL15/eL18_sf"/>
</dbReference>
<dbReference type="InterPro" id="IPR005749">
    <property type="entry name" value="Ribosomal_uL15_bac-type"/>
</dbReference>
<dbReference type="InterPro" id="IPR001196">
    <property type="entry name" value="Ribosomal_uL15_CS"/>
</dbReference>
<dbReference type="NCBIfam" id="TIGR01071">
    <property type="entry name" value="rplO_bact"/>
    <property type="match status" value="1"/>
</dbReference>
<dbReference type="PANTHER" id="PTHR12934">
    <property type="entry name" value="50S RIBOSOMAL PROTEIN L15"/>
    <property type="match status" value="1"/>
</dbReference>
<dbReference type="PANTHER" id="PTHR12934:SF11">
    <property type="entry name" value="LARGE RIBOSOMAL SUBUNIT PROTEIN UL15M"/>
    <property type="match status" value="1"/>
</dbReference>
<dbReference type="Pfam" id="PF00828">
    <property type="entry name" value="Ribosomal_L27A"/>
    <property type="match status" value="1"/>
</dbReference>
<dbReference type="SUPFAM" id="SSF52080">
    <property type="entry name" value="Ribosomal proteins L15p and L18e"/>
    <property type="match status" value="1"/>
</dbReference>
<dbReference type="PROSITE" id="PS00475">
    <property type="entry name" value="RIBOSOMAL_L15"/>
    <property type="match status" value="1"/>
</dbReference>
<proteinExistence type="inferred from homology"/>
<organism>
    <name type="scientific">Rhodopseudomonas palustris (strain TIE-1)</name>
    <dbReference type="NCBI Taxonomy" id="395960"/>
    <lineage>
        <taxon>Bacteria</taxon>
        <taxon>Pseudomonadati</taxon>
        <taxon>Pseudomonadota</taxon>
        <taxon>Alphaproteobacteria</taxon>
        <taxon>Hyphomicrobiales</taxon>
        <taxon>Nitrobacteraceae</taxon>
        <taxon>Rhodopseudomonas</taxon>
    </lineage>
</organism>
<accession>B3QBW1</accession>
<evidence type="ECO:0000255" key="1">
    <source>
        <dbReference type="HAMAP-Rule" id="MF_01341"/>
    </source>
</evidence>
<evidence type="ECO:0000256" key="2">
    <source>
        <dbReference type="SAM" id="MobiDB-lite"/>
    </source>
</evidence>
<evidence type="ECO:0000305" key="3"/>
<reference key="1">
    <citation type="submission" date="2008-05" db="EMBL/GenBank/DDBJ databases">
        <title>Complete sequence of Rhodopseudomonas palustris TIE-1.</title>
        <authorList>
            <consortium name="US DOE Joint Genome Institute"/>
            <person name="Lucas S."/>
            <person name="Copeland A."/>
            <person name="Lapidus A."/>
            <person name="Glavina del Rio T."/>
            <person name="Dalin E."/>
            <person name="Tice H."/>
            <person name="Pitluck S."/>
            <person name="Chain P."/>
            <person name="Malfatti S."/>
            <person name="Shin M."/>
            <person name="Vergez L."/>
            <person name="Lang D."/>
            <person name="Schmutz J."/>
            <person name="Larimer F."/>
            <person name="Land M."/>
            <person name="Hauser L."/>
            <person name="Kyrpides N."/>
            <person name="Mikhailova N."/>
            <person name="Emerson D."/>
            <person name="Newman D.K."/>
            <person name="Roden E."/>
            <person name="Richardson P."/>
        </authorList>
    </citation>
    <scope>NUCLEOTIDE SEQUENCE [LARGE SCALE GENOMIC DNA]</scope>
    <source>
        <strain>TIE-1</strain>
    </source>
</reference>
<name>RL15_RHOPT</name>
<gene>
    <name evidence="1" type="primary">rplO</name>
    <name type="ordered locus">Rpal_3648</name>
</gene>
<protein>
    <recommendedName>
        <fullName evidence="1">Large ribosomal subunit protein uL15</fullName>
    </recommendedName>
    <alternativeName>
        <fullName evidence="3">50S ribosomal protein L15</fullName>
    </alternativeName>
</protein>
<feature type="chain" id="PRO_1000142871" description="Large ribosomal subunit protein uL15">
    <location>
        <begin position="1"/>
        <end position="161"/>
    </location>
</feature>
<feature type="region of interest" description="Disordered" evidence="2">
    <location>
        <begin position="1"/>
        <end position="43"/>
    </location>
</feature>
<feature type="compositionally biased region" description="Gly residues" evidence="2">
    <location>
        <begin position="21"/>
        <end position="37"/>
    </location>
</feature>
<sequence>MKLSEIADNVGSRKKRMRIGRGIGSGKGKTGGRGGKGQTARSGVRIKGFEGGQMPLHRRLPKRGFNNIFALEFAEVNLDRLQEAVDSKAIDAGKVVDAAALVEAGVLRRAKDGVRLLGRGELTAKLNIEVHGATKSAIAAVEKAGGSVKILAPKAEEGEAA</sequence>
<comment type="function">
    <text evidence="1">Binds to the 23S rRNA.</text>
</comment>
<comment type="subunit">
    <text evidence="1">Part of the 50S ribosomal subunit.</text>
</comment>
<comment type="similarity">
    <text evidence="1">Belongs to the universal ribosomal protein uL15 family.</text>
</comment>
<keyword id="KW-0687">Ribonucleoprotein</keyword>
<keyword id="KW-0689">Ribosomal protein</keyword>
<keyword id="KW-0694">RNA-binding</keyword>
<keyword id="KW-0699">rRNA-binding</keyword>